<feature type="chain" id="PRO_0000044031" description="Regulatory protein MokC">
    <location>
        <begin position="1"/>
        <end position="69"/>
    </location>
</feature>
<feature type="transmembrane region" description="Helical" evidence="2">
    <location>
        <begin position="24"/>
        <end position="44"/>
    </location>
</feature>
<reference key="1">
    <citation type="journal article" date="1991" name="Mol. Microbiol.">
        <title>The gef gene from Escherichia coli is regulated at the level of translation.</title>
        <authorList>
            <person name="Poulsen L.K."/>
            <person name="Refn A."/>
            <person name="Molin S."/>
            <person name="Andersson P."/>
        </authorList>
    </citation>
    <scope>NUCLEOTIDE SEQUENCE [GENOMIC DNA]</scope>
</reference>
<reference key="2">
    <citation type="journal article" date="1997" name="Science">
        <title>The complete genome sequence of Escherichia coli K-12.</title>
        <authorList>
            <person name="Blattner F.R."/>
            <person name="Plunkett G. III"/>
            <person name="Bloch C.A."/>
            <person name="Perna N.T."/>
            <person name="Burland V."/>
            <person name="Riley M."/>
            <person name="Collado-Vides J."/>
            <person name="Glasner J.D."/>
            <person name="Rode C.K."/>
            <person name="Mayhew G.F."/>
            <person name="Gregor J."/>
            <person name="Davis N.W."/>
            <person name="Kirkpatrick H.A."/>
            <person name="Goeden M.A."/>
            <person name="Rose D.J."/>
            <person name="Mau B."/>
            <person name="Shao Y."/>
        </authorList>
    </citation>
    <scope>NUCLEOTIDE SEQUENCE [LARGE SCALE GENOMIC DNA]</scope>
    <source>
        <strain>K12 / MG1655 / ATCC 47076</strain>
    </source>
</reference>
<reference key="3">
    <citation type="journal article" date="2006" name="Mol. Syst. Biol.">
        <title>Highly accurate genome sequences of Escherichia coli K-12 strains MG1655 and W3110.</title>
        <authorList>
            <person name="Hayashi K."/>
            <person name="Morooka N."/>
            <person name="Yamamoto Y."/>
            <person name="Fujita K."/>
            <person name="Isono K."/>
            <person name="Choi S."/>
            <person name="Ohtsubo E."/>
            <person name="Baba T."/>
            <person name="Wanner B.L."/>
            <person name="Mori H."/>
            <person name="Horiuchi T."/>
        </authorList>
    </citation>
    <scope>NUCLEOTIDE SEQUENCE [LARGE SCALE GENOMIC DNA]</scope>
    <source>
        <strain>K12 / W3110 / ATCC 27325 / DSM 5911</strain>
    </source>
</reference>
<reference key="4">
    <citation type="journal article" date="1999" name="Mol. Microbiol.">
        <title>Multiple hok genes on the chromosome of Escherichia coli.</title>
        <authorList>
            <person name="Pedersen K."/>
            <person name="Gerdes K."/>
        </authorList>
    </citation>
    <scope>PROBABLE FUNCTION</scope>
</reference>
<gene>
    <name type="primary">mokC</name>
    <name type="synonym">gefL</name>
    <name type="ordered locus">b0018</name>
    <name type="ordered locus">JW5879</name>
</gene>
<keyword id="KW-0997">Cell inner membrane</keyword>
<keyword id="KW-1003">Cell membrane</keyword>
<keyword id="KW-0472">Membrane</keyword>
<keyword id="KW-1185">Reference proteome</keyword>
<keyword id="KW-1277">Toxin-antitoxin system</keyword>
<keyword id="KW-0812">Transmembrane</keyword>
<keyword id="KW-1133">Transmembrane helix</keyword>
<protein>
    <recommendedName>
        <fullName>Regulatory protein MokC</fullName>
    </recommendedName>
</protein>
<dbReference type="EMBL" id="U00096">
    <property type="protein sequence ID" value="AAC73129.1"/>
    <property type="molecule type" value="Genomic_DNA"/>
</dbReference>
<dbReference type="EMBL" id="AP009048">
    <property type="protein sequence ID" value="BAB96591.1"/>
    <property type="molecule type" value="Genomic_DNA"/>
</dbReference>
<dbReference type="RefSeq" id="NP_414559.1">
    <property type="nucleotide sequence ID" value="NC_000913.3"/>
</dbReference>
<dbReference type="FunCoup" id="P33236">
    <property type="interactions" value="74"/>
</dbReference>
<dbReference type="STRING" id="511145.b0018"/>
<dbReference type="PaxDb" id="511145-b0018"/>
<dbReference type="EnsemblBacteria" id="AAC73129">
    <property type="protein sequence ID" value="AAC73129"/>
    <property type="gene ID" value="b0018"/>
</dbReference>
<dbReference type="GeneID" id="944756"/>
<dbReference type="KEGG" id="ecj:JW5879"/>
<dbReference type="KEGG" id="eco:b0018"/>
<dbReference type="PATRIC" id="fig|83333.113.peg.18"/>
<dbReference type="EchoBASE" id="EB1999"/>
<dbReference type="eggNOG" id="ENOG50325FR">
    <property type="taxonomic scope" value="Bacteria"/>
</dbReference>
<dbReference type="eggNOG" id="ENOG50339QC">
    <property type="taxonomic scope" value="Bacteria"/>
</dbReference>
<dbReference type="HOGENOM" id="CLU_177638_2_0_6"/>
<dbReference type="InParanoid" id="P33236"/>
<dbReference type="OMA" id="QHKVMIV"/>
<dbReference type="OrthoDB" id="6556178at2"/>
<dbReference type="PhylomeDB" id="P33236"/>
<dbReference type="BioCyc" id="EcoCyc:EG10373-MONOMER"/>
<dbReference type="PRO" id="PR:P33236"/>
<dbReference type="Proteomes" id="UP000000625">
    <property type="component" value="Chromosome"/>
</dbReference>
<dbReference type="GO" id="GO:0005886">
    <property type="term" value="C:plasma membrane"/>
    <property type="evidence" value="ECO:0007669"/>
    <property type="project" value="UniProtKB-SubCell"/>
</dbReference>
<dbReference type="InterPro" id="IPR000021">
    <property type="entry name" value="Hok/gef_toxin"/>
</dbReference>
<dbReference type="InterPro" id="IPR018084">
    <property type="entry name" value="Hok/gef_toxin_CS"/>
</dbReference>
<dbReference type="Pfam" id="PF01848">
    <property type="entry name" value="HOK_GEF"/>
    <property type="match status" value="1"/>
</dbReference>
<dbReference type="PRINTS" id="PR00281">
    <property type="entry name" value="HOKGEFTOXIC"/>
</dbReference>
<dbReference type="PROSITE" id="PS00556">
    <property type="entry name" value="HOK_GEF"/>
    <property type="match status" value="1"/>
</dbReference>
<comment type="function">
    <text evidence="1 4">Might be the toxic component of a type I toxin-antitoxin (TA) system (By similarity). Regulatory peptide which completely overlaps hokC and enables hokC expression.</text>
</comment>
<comment type="subcellular location">
    <subcellularLocation>
        <location evidence="1">Cell inner membrane</location>
        <topology evidence="3">Single-pass membrane protein</topology>
    </subcellularLocation>
</comment>
<comment type="similarity">
    <text evidence="3">Belongs to the Hok/Gef family.</text>
</comment>
<comment type="caution">
    <text evidence="5">Was originally described as a gef leader peptide.</text>
</comment>
<proteinExistence type="inferred from homology"/>
<accession>P33236</accession>
<sequence length="69" mass="7742">MLNTCRVPLTDRKVKEKRAMKQHKAMIVALIVICITAVVAALVTRKDLCEVHIRTGQTEVAVFTAYESE</sequence>
<organism>
    <name type="scientific">Escherichia coli (strain K12)</name>
    <dbReference type="NCBI Taxonomy" id="83333"/>
    <lineage>
        <taxon>Bacteria</taxon>
        <taxon>Pseudomonadati</taxon>
        <taxon>Pseudomonadota</taxon>
        <taxon>Gammaproteobacteria</taxon>
        <taxon>Enterobacterales</taxon>
        <taxon>Enterobacteriaceae</taxon>
        <taxon>Escherichia</taxon>
    </lineage>
</organism>
<name>MOKC_ECOLI</name>
<evidence type="ECO:0000250" key="1">
    <source>
        <dbReference type="UniProtKB" id="P0ACG4"/>
    </source>
</evidence>
<evidence type="ECO:0000255" key="2"/>
<evidence type="ECO:0000305" key="3"/>
<evidence type="ECO:0000305" key="4">
    <source>
    </source>
</evidence>
<evidence type="ECO:0000305" key="5">
    <source>
    </source>
</evidence>